<comment type="function">
    <text evidence="1">Required for rescue of stalled ribosomes mediated by trans-translation. Binds to transfer-messenger RNA (tmRNA), required for stable association of tmRNA with ribosomes. tmRNA and SmpB together mimic tRNA shape, replacing the anticodon stem-loop with SmpB. tmRNA is encoded by the ssrA gene; the 2 termini fold to resemble tRNA(Ala) and it encodes a 'tag peptide', a short internal open reading frame. During trans-translation Ala-aminoacylated tmRNA acts like a tRNA, entering the A-site of stalled ribosomes, displacing the stalled mRNA. The ribosome then switches to translate the ORF on the tmRNA; the nascent peptide is terminated with the 'tag peptide' encoded by the tmRNA and targeted for degradation. The ribosome is freed to recommence translation, which seems to be the essential function of trans-translation.</text>
</comment>
<comment type="subcellular location">
    <subcellularLocation>
        <location evidence="1">Cytoplasm</location>
    </subcellularLocation>
    <text evidence="1">The tmRNA-SmpB complex associates with stalled 70S ribosomes.</text>
</comment>
<comment type="similarity">
    <text evidence="1">Belongs to the SmpB family.</text>
</comment>
<accession>Q4A5T2</accession>
<name>SSRP_MYCS5</name>
<proteinExistence type="inferred from homology"/>
<organism>
    <name type="scientific">Mycoplasmopsis synoviae (strain 53)</name>
    <name type="common">Mycoplasma synoviae</name>
    <dbReference type="NCBI Taxonomy" id="262723"/>
    <lineage>
        <taxon>Bacteria</taxon>
        <taxon>Bacillati</taxon>
        <taxon>Mycoplasmatota</taxon>
        <taxon>Mycoplasmoidales</taxon>
        <taxon>Metamycoplasmataceae</taxon>
        <taxon>Mycoplasmopsis</taxon>
    </lineage>
</organism>
<reference key="1">
    <citation type="journal article" date="2005" name="J. Bacteriol.">
        <title>Swine and poultry pathogens: the complete genome sequences of two strains of Mycoplasma hyopneumoniae and a strain of Mycoplasma synoviae.</title>
        <authorList>
            <person name="Vasconcelos A.T.R."/>
            <person name="Ferreira H.B."/>
            <person name="Bizarro C.V."/>
            <person name="Bonatto S.L."/>
            <person name="Carvalho M.O."/>
            <person name="Pinto P.M."/>
            <person name="Almeida D.F."/>
            <person name="Almeida L.G.P."/>
            <person name="Almeida R."/>
            <person name="Alves-Junior L."/>
            <person name="Assuncao E.N."/>
            <person name="Azevedo V.A.C."/>
            <person name="Bogo M.R."/>
            <person name="Brigido M.M."/>
            <person name="Brocchi M."/>
            <person name="Burity H.A."/>
            <person name="Camargo A.A."/>
            <person name="Camargo S.S."/>
            <person name="Carepo M.S."/>
            <person name="Carraro D.M."/>
            <person name="de Mattos Cascardo J.C."/>
            <person name="Castro L.A."/>
            <person name="Cavalcanti G."/>
            <person name="Chemale G."/>
            <person name="Collevatti R.G."/>
            <person name="Cunha C.W."/>
            <person name="Dallagiovanna B."/>
            <person name="Dambros B.P."/>
            <person name="Dellagostin O.A."/>
            <person name="Falcao C."/>
            <person name="Fantinatti-Garboggini F."/>
            <person name="Felipe M.S.S."/>
            <person name="Fiorentin L."/>
            <person name="Franco G.R."/>
            <person name="Freitas N.S.A."/>
            <person name="Frias D."/>
            <person name="Grangeiro T.B."/>
            <person name="Grisard E.C."/>
            <person name="Guimaraes C.T."/>
            <person name="Hungria M."/>
            <person name="Jardim S.N."/>
            <person name="Krieger M.A."/>
            <person name="Laurino J.P."/>
            <person name="Lima L.F.A."/>
            <person name="Lopes M.I."/>
            <person name="Loreto E.L.S."/>
            <person name="Madeira H.M.F."/>
            <person name="Manfio G.P."/>
            <person name="Maranhao A.Q."/>
            <person name="Martinkovics C.T."/>
            <person name="Medeiros S.R.B."/>
            <person name="Moreira M.A.M."/>
            <person name="Neiva M."/>
            <person name="Ramalho-Neto C.E."/>
            <person name="Nicolas M.F."/>
            <person name="Oliveira S.C."/>
            <person name="Paixao R.F.C."/>
            <person name="Pedrosa F.O."/>
            <person name="Pena S.D.J."/>
            <person name="Pereira M."/>
            <person name="Pereira-Ferrari L."/>
            <person name="Piffer I."/>
            <person name="Pinto L.S."/>
            <person name="Potrich D.P."/>
            <person name="Salim A.C.M."/>
            <person name="Santos F.R."/>
            <person name="Schmitt R."/>
            <person name="Schneider M.P.C."/>
            <person name="Schrank A."/>
            <person name="Schrank I.S."/>
            <person name="Schuck A.F."/>
            <person name="Seuanez H.N."/>
            <person name="Silva D.W."/>
            <person name="Silva R."/>
            <person name="Silva S.C."/>
            <person name="Soares C.M.A."/>
            <person name="Souza K.R.L."/>
            <person name="Souza R.C."/>
            <person name="Staats C.C."/>
            <person name="Steffens M.B.R."/>
            <person name="Teixeira S.M.R."/>
            <person name="Urmenyi T.P."/>
            <person name="Vainstein M.H."/>
            <person name="Zuccherato L.W."/>
            <person name="Simpson A.J.G."/>
            <person name="Zaha A."/>
        </authorList>
    </citation>
    <scope>NUCLEOTIDE SEQUENCE [LARGE SCALE GENOMIC DNA]</scope>
    <source>
        <strain>53</strain>
    </source>
</reference>
<protein>
    <recommendedName>
        <fullName evidence="1">SsrA-binding protein</fullName>
    </recommendedName>
    <alternativeName>
        <fullName evidence="1">Small protein B</fullName>
    </alternativeName>
</protein>
<keyword id="KW-0963">Cytoplasm</keyword>
<keyword id="KW-1185">Reference proteome</keyword>
<keyword id="KW-0694">RNA-binding</keyword>
<feature type="chain" id="PRO_1000090168" description="SsrA-binding protein">
    <location>
        <begin position="1"/>
        <end position="143"/>
    </location>
</feature>
<evidence type="ECO:0000255" key="1">
    <source>
        <dbReference type="HAMAP-Rule" id="MF_00023"/>
    </source>
</evidence>
<dbReference type="EMBL" id="AE017245">
    <property type="protein sequence ID" value="AAZ43889.1"/>
    <property type="molecule type" value="Genomic_DNA"/>
</dbReference>
<dbReference type="RefSeq" id="WP_011283618.1">
    <property type="nucleotide sequence ID" value="NC_007294.1"/>
</dbReference>
<dbReference type="SMR" id="Q4A5T2"/>
<dbReference type="STRING" id="262723.MS53_0480"/>
<dbReference type="GeneID" id="93530262"/>
<dbReference type="KEGG" id="msy:MS53_0480"/>
<dbReference type="eggNOG" id="COG0691">
    <property type="taxonomic scope" value="Bacteria"/>
</dbReference>
<dbReference type="HOGENOM" id="CLU_108953_3_1_14"/>
<dbReference type="OrthoDB" id="9805462at2"/>
<dbReference type="Proteomes" id="UP000000549">
    <property type="component" value="Chromosome"/>
</dbReference>
<dbReference type="GO" id="GO:0005829">
    <property type="term" value="C:cytosol"/>
    <property type="evidence" value="ECO:0007669"/>
    <property type="project" value="TreeGrafter"/>
</dbReference>
<dbReference type="GO" id="GO:0003723">
    <property type="term" value="F:RNA binding"/>
    <property type="evidence" value="ECO:0007669"/>
    <property type="project" value="UniProtKB-UniRule"/>
</dbReference>
<dbReference type="GO" id="GO:0070929">
    <property type="term" value="P:trans-translation"/>
    <property type="evidence" value="ECO:0007669"/>
    <property type="project" value="UniProtKB-UniRule"/>
</dbReference>
<dbReference type="CDD" id="cd09294">
    <property type="entry name" value="SmpB"/>
    <property type="match status" value="1"/>
</dbReference>
<dbReference type="Gene3D" id="2.40.280.10">
    <property type="match status" value="1"/>
</dbReference>
<dbReference type="HAMAP" id="MF_00023">
    <property type="entry name" value="SmpB"/>
    <property type="match status" value="1"/>
</dbReference>
<dbReference type="InterPro" id="IPR023620">
    <property type="entry name" value="SmpB"/>
</dbReference>
<dbReference type="InterPro" id="IPR000037">
    <property type="entry name" value="SsrA-bd_prot"/>
</dbReference>
<dbReference type="InterPro" id="IPR020081">
    <property type="entry name" value="SsrA-bd_prot_CS"/>
</dbReference>
<dbReference type="NCBIfam" id="NF003843">
    <property type="entry name" value="PRK05422.1"/>
    <property type="match status" value="1"/>
</dbReference>
<dbReference type="NCBIfam" id="TIGR00086">
    <property type="entry name" value="smpB"/>
    <property type="match status" value="1"/>
</dbReference>
<dbReference type="PANTHER" id="PTHR30308:SF2">
    <property type="entry name" value="SSRA-BINDING PROTEIN"/>
    <property type="match status" value="1"/>
</dbReference>
<dbReference type="PANTHER" id="PTHR30308">
    <property type="entry name" value="TMRNA-BINDING COMPONENT OF TRANS-TRANSLATION TAGGING COMPLEX"/>
    <property type="match status" value="1"/>
</dbReference>
<dbReference type="Pfam" id="PF01668">
    <property type="entry name" value="SmpB"/>
    <property type="match status" value="1"/>
</dbReference>
<dbReference type="SUPFAM" id="SSF74982">
    <property type="entry name" value="Small protein B (SmpB)"/>
    <property type="match status" value="1"/>
</dbReference>
<dbReference type="PROSITE" id="PS01317">
    <property type="entry name" value="SSRP"/>
    <property type="match status" value="1"/>
</dbReference>
<sequence>MKIIATNKNAKRNYEILKTFEAGIKLEGWEVKSARASSVELKNAYCSIYKDEVFLKESYFKKYMLLKVEETKNRKLLLHKKEILKIKQELQKNLSLIPTKIYFNSNSLIKVELALGRGLKKYDKREKLKKEEVEKKLKKILKF</sequence>
<gene>
    <name evidence="1" type="primary">smpB</name>
    <name type="ordered locus">MS53_0480</name>
</gene>